<protein>
    <recommendedName>
        <fullName>Metallothionein-like protein type 2</fullName>
    </recommendedName>
</protein>
<reference key="1">
    <citation type="journal article" date="1996" name="Sex. Plant Reprod.">
        <title>Identification of genes expressed in the shoot apex of Brassica campestris during floral transition.</title>
        <authorList>
            <person name="Kitashiba H."/>
            <person name="Iwai T."/>
            <person name="Toriyama K."/>
            <person name="Watanabe M."/>
            <person name="Hinata K."/>
        </authorList>
        <dbReference type="AGRICOLA" id="IND20526774"/>
    </citation>
    <scope>NUCLEOTIDE SEQUENCE [MRNA]</scope>
    <source>
        <strain>cv. Osome</strain>
        <tissue>Shoot apex</tissue>
    </source>
</reference>
<comment type="function">
    <text>Metallothioneins have a high content of cysteine residues that bind various heavy metals.</text>
</comment>
<comment type="similarity">
    <text evidence="1">Belongs to the metallothionein superfamily. Type 15 family.</text>
</comment>
<accession>P69164</accession>
<accession>Q39410</accession>
<accession>Q42494</accession>
<organism>
    <name type="scientific">Brassica campestris</name>
    <name type="common">Field mustard</name>
    <dbReference type="NCBI Taxonomy" id="3711"/>
    <lineage>
        <taxon>Eukaryota</taxon>
        <taxon>Viridiplantae</taxon>
        <taxon>Streptophyta</taxon>
        <taxon>Embryophyta</taxon>
        <taxon>Tracheophyta</taxon>
        <taxon>Spermatophyta</taxon>
        <taxon>Magnoliopsida</taxon>
        <taxon>eudicotyledons</taxon>
        <taxon>Gunneridae</taxon>
        <taxon>Pentapetalae</taxon>
        <taxon>rosids</taxon>
        <taxon>malvids</taxon>
        <taxon>Brassicales</taxon>
        <taxon>Brassicaceae</taxon>
        <taxon>Brassiceae</taxon>
        <taxon>Brassica</taxon>
    </lineage>
</organism>
<feature type="chain" id="PRO_0000197393" description="Metallothionein-like protein type 2">
    <location>
        <begin position="1"/>
        <end position="80"/>
    </location>
</feature>
<feature type="sequence conflict" description="In Ref. 1; BAA11391." evidence="1" ref="1">
    <original>C</original>
    <variation>S</variation>
    <location>
        <position position="16"/>
    </location>
</feature>
<dbReference type="EMBL" id="D78491">
    <property type="protein sequence ID" value="BAA11388.1"/>
    <property type="molecule type" value="mRNA"/>
</dbReference>
<dbReference type="EMBL" id="D78494">
    <property type="protein sequence ID" value="BAA11391.1"/>
    <property type="molecule type" value="mRNA"/>
</dbReference>
<dbReference type="EMBL" id="D78498">
    <property type="protein sequence ID" value="BAA11394.1"/>
    <property type="molecule type" value="mRNA"/>
</dbReference>
<dbReference type="RefSeq" id="XP_009146932.1">
    <property type="nucleotide sequence ID" value="XM_009148684.3"/>
</dbReference>
<dbReference type="EnsemblPlants" id="A05p45600.2_BraZ1">
    <property type="protein sequence ID" value="A05p45600.2_BraZ1.CDS"/>
    <property type="gene ID" value="A05g45600.2_BraZ1"/>
</dbReference>
<dbReference type="EnsemblPlants" id="Bra029765.1">
    <property type="protein sequence ID" value="Bra029765.1-P"/>
    <property type="gene ID" value="Bra029765"/>
</dbReference>
<dbReference type="GeneID" id="103870546"/>
<dbReference type="Gramene" id="A05p45600.2_BraZ1">
    <property type="protein sequence ID" value="A05p45600.2_BraZ1.CDS"/>
    <property type="gene ID" value="A05g45600.2_BraZ1"/>
</dbReference>
<dbReference type="Gramene" id="Bra029765.1">
    <property type="protein sequence ID" value="Bra029765.1-P"/>
    <property type="gene ID" value="Bra029765"/>
</dbReference>
<dbReference type="KEGG" id="brp:103870546"/>
<dbReference type="OMA" id="APSNKGH"/>
<dbReference type="OrthoDB" id="1111048at2759"/>
<dbReference type="Proteomes" id="UP000011750">
    <property type="component" value="Chromosome A05"/>
</dbReference>
<dbReference type="GO" id="GO:0046872">
    <property type="term" value="F:metal ion binding"/>
    <property type="evidence" value="ECO:0007669"/>
    <property type="project" value="UniProtKB-KW"/>
</dbReference>
<dbReference type="InterPro" id="IPR000347">
    <property type="entry name" value="Metalthion_15p"/>
</dbReference>
<dbReference type="PANTHER" id="PTHR33543">
    <property type="entry name" value="METALLOTHIONEIN-LIKE PROTEIN 2A"/>
    <property type="match status" value="1"/>
</dbReference>
<dbReference type="PANTHER" id="PTHR33543:SF36">
    <property type="entry name" value="METALLOTHIONEIN-LIKE PROTEIN 2A"/>
    <property type="match status" value="1"/>
</dbReference>
<dbReference type="Pfam" id="PF01439">
    <property type="entry name" value="Metallothio_2"/>
    <property type="match status" value="1"/>
</dbReference>
<proteinExistence type="inferred from homology"/>
<evidence type="ECO:0000305" key="1"/>
<keyword id="KW-0479">Metal-binding</keyword>
<keyword id="KW-0480">Metal-thiolate cluster</keyword>
<keyword id="KW-1185">Reference proteome</keyword>
<sequence>MSCCGGNCGCGSGCKCGNGCGGCKMYPDLGFSGESTTTETFVFGVAPAMKNQYEASGEGVAENDACKCGSDCKCDPCTCK</sequence>
<name>MT2_BRACM</name>